<feature type="chain" id="PRO_0000345460" description="Small ribosomal subunit protein bS18">
    <location>
        <begin position="1"/>
        <end position="77"/>
    </location>
</feature>
<reference key="1">
    <citation type="submission" date="2007-03" db="EMBL/GenBank/DDBJ databases">
        <title>Complete sequence of Desulfotomaculum reducens MI-1.</title>
        <authorList>
            <consortium name="US DOE Joint Genome Institute"/>
            <person name="Copeland A."/>
            <person name="Lucas S."/>
            <person name="Lapidus A."/>
            <person name="Barry K."/>
            <person name="Detter J.C."/>
            <person name="Glavina del Rio T."/>
            <person name="Hammon N."/>
            <person name="Israni S."/>
            <person name="Dalin E."/>
            <person name="Tice H."/>
            <person name="Pitluck S."/>
            <person name="Sims D."/>
            <person name="Brettin T."/>
            <person name="Bruce D."/>
            <person name="Han C."/>
            <person name="Tapia R."/>
            <person name="Schmutz J."/>
            <person name="Larimer F."/>
            <person name="Land M."/>
            <person name="Hauser L."/>
            <person name="Kyrpides N."/>
            <person name="Kim E."/>
            <person name="Tebo B.M."/>
            <person name="Richardson P."/>
        </authorList>
    </citation>
    <scope>NUCLEOTIDE SEQUENCE [LARGE SCALE GENOMIC DNA]</scope>
    <source>
        <strain>ATCC BAA-1160 / DSM 100696 / MI-1</strain>
    </source>
</reference>
<dbReference type="EMBL" id="CP000612">
    <property type="protein sequence ID" value="ABO51806.1"/>
    <property type="molecule type" value="Genomic_DNA"/>
</dbReference>
<dbReference type="RefSeq" id="WP_011879591.1">
    <property type="nucleotide sequence ID" value="NC_009253.1"/>
</dbReference>
<dbReference type="SMR" id="A4J9Q3"/>
<dbReference type="STRING" id="349161.Dred_3306"/>
<dbReference type="KEGG" id="drm:Dred_3306"/>
<dbReference type="eggNOG" id="COG0238">
    <property type="taxonomic scope" value="Bacteria"/>
</dbReference>
<dbReference type="HOGENOM" id="CLU_148710_2_2_9"/>
<dbReference type="OrthoDB" id="9812008at2"/>
<dbReference type="Proteomes" id="UP000001556">
    <property type="component" value="Chromosome"/>
</dbReference>
<dbReference type="GO" id="GO:0022627">
    <property type="term" value="C:cytosolic small ribosomal subunit"/>
    <property type="evidence" value="ECO:0007669"/>
    <property type="project" value="TreeGrafter"/>
</dbReference>
<dbReference type="GO" id="GO:0070181">
    <property type="term" value="F:small ribosomal subunit rRNA binding"/>
    <property type="evidence" value="ECO:0007669"/>
    <property type="project" value="TreeGrafter"/>
</dbReference>
<dbReference type="GO" id="GO:0003735">
    <property type="term" value="F:structural constituent of ribosome"/>
    <property type="evidence" value="ECO:0007669"/>
    <property type="project" value="InterPro"/>
</dbReference>
<dbReference type="GO" id="GO:0006412">
    <property type="term" value="P:translation"/>
    <property type="evidence" value="ECO:0007669"/>
    <property type="project" value="UniProtKB-UniRule"/>
</dbReference>
<dbReference type="FunFam" id="4.10.640.10:FF:000004">
    <property type="entry name" value="30S ribosomal protein S18"/>
    <property type="match status" value="1"/>
</dbReference>
<dbReference type="Gene3D" id="4.10.640.10">
    <property type="entry name" value="Ribosomal protein S18"/>
    <property type="match status" value="1"/>
</dbReference>
<dbReference type="HAMAP" id="MF_00270">
    <property type="entry name" value="Ribosomal_bS18"/>
    <property type="match status" value="1"/>
</dbReference>
<dbReference type="InterPro" id="IPR001648">
    <property type="entry name" value="Ribosomal_bS18"/>
</dbReference>
<dbReference type="InterPro" id="IPR018275">
    <property type="entry name" value="Ribosomal_bS18_CS"/>
</dbReference>
<dbReference type="InterPro" id="IPR036870">
    <property type="entry name" value="Ribosomal_bS18_sf"/>
</dbReference>
<dbReference type="NCBIfam" id="TIGR00165">
    <property type="entry name" value="S18"/>
    <property type="match status" value="1"/>
</dbReference>
<dbReference type="PANTHER" id="PTHR13479">
    <property type="entry name" value="30S RIBOSOMAL PROTEIN S18"/>
    <property type="match status" value="1"/>
</dbReference>
<dbReference type="PANTHER" id="PTHR13479:SF40">
    <property type="entry name" value="SMALL RIBOSOMAL SUBUNIT PROTEIN BS18M"/>
    <property type="match status" value="1"/>
</dbReference>
<dbReference type="Pfam" id="PF01084">
    <property type="entry name" value="Ribosomal_S18"/>
    <property type="match status" value="1"/>
</dbReference>
<dbReference type="PRINTS" id="PR00974">
    <property type="entry name" value="RIBOSOMALS18"/>
</dbReference>
<dbReference type="SUPFAM" id="SSF46911">
    <property type="entry name" value="Ribosomal protein S18"/>
    <property type="match status" value="1"/>
</dbReference>
<dbReference type="PROSITE" id="PS00057">
    <property type="entry name" value="RIBOSOMAL_S18"/>
    <property type="match status" value="1"/>
</dbReference>
<name>RS18_DESRM</name>
<sequence length="77" mass="8980">MKRERGRRGRKRVCSFCVDKATSIDYKETSKLRKYVTERGKILPRRISGNCAHHQRMLTTAIKRSRNIALLPFSTEA</sequence>
<evidence type="ECO:0000255" key="1">
    <source>
        <dbReference type="HAMAP-Rule" id="MF_00270"/>
    </source>
</evidence>
<evidence type="ECO:0000305" key="2"/>
<protein>
    <recommendedName>
        <fullName evidence="1">Small ribosomal subunit protein bS18</fullName>
    </recommendedName>
    <alternativeName>
        <fullName evidence="2">30S ribosomal protein S18</fullName>
    </alternativeName>
</protein>
<gene>
    <name evidence="1" type="primary">rpsR</name>
    <name type="ordered locus">Dred_3306</name>
</gene>
<keyword id="KW-1185">Reference proteome</keyword>
<keyword id="KW-0687">Ribonucleoprotein</keyword>
<keyword id="KW-0689">Ribosomal protein</keyword>
<keyword id="KW-0694">RNA-binding</keyword>
<keyword id="KW-0699">rRNA-binding</keyword>
<organism>
    <name type="scientific">Desulforamulus reducens (strain ATCC BAA-1160 / DSM 100696 / MI-1)</name>
    <name type="common">Desulfotomaculum reducens</name>
    <dbReference type="NCBI Taxonomy" id="349161"/>
    <lineage>
        <taxon>Bacteria</taxon>
        <taxon>Bacillati</taxon>
        <taxon>Bacillota</taxon>
        <taxon>Clostridia</taxon>
        <taxon>Eubacteriales</taxon>
        <taxon>Peptococcaceae</taxon>
        <taxon>Desulforamulus</taxon>
    </lineage>
</organism>
<accession>A4J9Q3</accession>
<proteinExistence type="inferred from homology"/>
<comment type="function">
    <text evidence="1">Binds as a heterodimer with protein bS6 to the central domain of the 16S rRNA, where it helps stabilize the platform of the 30S subunit.</text>
</comment>
<comment type="subunit">
    <text evidence="1">Part of the 30S ribosomal subunit. Forms a tight heterodimer with protein bS6.</text>
</comment>
<comment type="similarity">
    <text evidence="1">Belongs to the bacterial ribosomal protein bS18 family.</text>
</comment>